<dbReference type="EMBL" id="CP001139">
    <property type="protein sequence ID" value="ACH66230.1"/>
    <property type="molecule type" value="Genomic_DNA"/>
</dbReference>
<dbReference type="RefSeq" id="WP_005420956.1">
    <property type="nucleotide sequence ID" value="NC_011184.1"/>
</dbReference>
<dbReference type="SMR" id="B5FB54"/>
<dbReference type="GeneID" id="54164937"/>
<dbReference type="KEGG" id="vfm:VFMJ11_2332"/>
<dbReference type="HOGENOM" id="CLU_046483_2_1_6"/>
<dbReference type="Proteomes" id="UP000001857">
    <property type="component" value="Chromosome I"/>
</dbReference>
<dbReference type="GO" id="GO:0022627">
    <property type="term" value="C:cytosolic small ribosomal subunit"/>
    <property type="evidence" value="ECO:0007669"/>
    <property type="project" value="TreeGrafter"/>
</dbReference>
<dbReference type="GO" id="GO:0003723">
    <property type="term" value="F:RNA binding"/>
    <property type="evidence" value="ECO:0007669"/>
    <property type="project" value="TreeGrafter"/>
</dbReference>
<dbReference type="GO" id="GO:0003735">
    <property type="term" value="F:structural constituent of ribosome"/>
    <property type="evidence" value="ECO:0007669"/>
    <property type="project" value="InterPro"/>
</dbReference>
<dbReference type="GO" id="GO:0006412">
    <property type="term" value="P:translation"/>
    <property type="evidence" value="ECO:0007669"/>
    <property type="project" value="UniProtKB-UniRule"/>
</dbReference>
<dbReference type="FunFam" id="3.30.230.10:FF:000001">
    <property type="entry name" value="30S ribosomal protein S9"/>
    <property type="match status" value="1"/>
</dbReference>
<dbReference type="Gene3D" id="3.30.230.10">
    <property type="match status" value="1"/>
</dbReference>
<dbReference type="HAMAP" id="MF_00532_B">
    <property type="entry name" value="Ribosomal_uS9_B"/>
    <property type="match status" value="1"/>
</dbReference>
<dbReference type="InterPro" id="IPR020568">
    <property type="entry name" value="Ribosomal_Su5_D2-typ_SF"/>
</dbReference>
<dbReference type="InterPro" id="IPR000754">
    <property type="entry name" value="Ribosomal_uS9"/>
</dbReference>
<dbReference type="InterPro" id="IPR023035">
    <property type="entry name" value="Ribosomal_uS9_bac/plastid"/>
</dbReference>
<dbReference type="InterPro" id="IPR020574">
    <property type="entry name" value="Ribosomal_uS9_CS"/>
</dbReference>
<dbReference type="InterPro" id="IPR014721">
    <property type="entry name" value="Ribsml_uS5_D2-typ_fold_subgr"/>
</dbReference>
<dbReference type="NCBIfam" id="NF001099">
    <property type="entry name" value="PRK00132.1"/>
    <property type="match status" value="1"/>
</dbReference>
<dbReference type="PANTHER" id="PTHR21569">
    <property type="entry name" value="RIBOSOMAL PROTEIN S9"/>
    <property type="match status" value="1"/>
</dbReference>
<dbReference type="PANTHER" id="PTHR21569:SF1">
    <property type="entry name" value="SMALL RIBOSOMAL SUBUNIT PROTEIN US9M"/>
    <property type="match status" value="1"/>
</dbReference>
<dbReference type="Pfam" id="PF00380">
    <property type="entry name" value="Ribosomal_S9"/>
    <property type="match status" value="1"/>
</dbReference>
<dbReference type="SUPFAM" id="SSF54211">
    <property type="entry name" value="Ribosomal protein S5 domain 2-like"/>
    <property type="match status" value="1"/>
</dbReference>
<dbReference type="PROSITE" id="PS00360">
    <property type="entry name" value="RIBOSOMAL_S9"/>
    <property type="match status" value="1"/>
</dbReference>
<keyword id="KW-0687">Ribonucleoprotein</keyword>
<keyword id="KW-0689">Ribosomal protein</keyword>
<name>RS9_ALIFM</name>
<proteinExistence type="inferred from homology"/>
<reference key="1">
    <citation type="submission" date="2008-08" db="EMBL/GenBank/DDBJ databases">
        <title>Complete sequence of Vibrio fischeri strain MJ11.</title>
        <authorList>
            <person name="Mandel M.J."/>
            <person name="Stabb E.V."/>
            <person name="Ruby E.G."/>
            <person name="Ferriera S."/>
            <person name="Johnson J."/>
            <person name="Kravitz S."/>
            <person name="Beeson K."/>
            <person name="Sutton G."/>
            <person name="Rogers Y.-H."/>
            <person name="Friedman R."/>
            <person name="Frazier M."/>
            <person name="Venter J.C."/>
        </authorList>
    </citation>
    <scope>NUCLEOTIDE SEQUENCE [LARGE SCALE GENOMIC DNA]</scope>
    <source>
        <strain>MJ11</strain>
    </source>
</reference>
<comment type="similarity">
    <text evidence="1">Belongs to the universal ribosomal protein uS9 family.</text>
</comment>
<gene>
    <name evidence="1" type="primary">rpsI</name>
    <name type="ordered locus">VFMJ11_2332</name>
</gene>
<protein>
    <recommendedName>
        <fullName evidence="1">Small ribosomal subunit protein uS9</fullName>
    </recommendedName>
    <alternativeName>
        <fullName evidence="2">30S ribosomal protein S9</fullName>
    </alternativeName>
</protein>
<organism>
    <name type="scientific">Aliivibrio fischeri (strain MJ11)</name>
    <name type="common">Vibrio fischeri</name>
    <dbReference type="NCBI Taxonomy" id="388396"/>
    <lineage>
        <taxon>Bacteria</taxon>
        <taxon>Pseudomonadati</taxon>
        <taxon>Pseudomonadota</taxon>
        <taxon>Gammaproteobacteria</taxon>
        <taxon>Vibrionales</taxon>
        <taxon>Vibrionaceae</taxon>
        <taxon>Aliivibrio</taxon>
    </lineage>
</organism>
<sequence>MAENQYYGTGRRKSSAARVFIKPGTGNIVINKRSLEVYFGRPTARMVVNQPLELVEMTDKLDLYITVSGGGISGQAGAIRHGITRALMQYDESLRPALRAAGYVTRDARCVERKKVGLRKARRKPQFSKR</sequence>
<evidence type="ECO:0000255" key="1">
    <source>
        <dbReference type="HAMAP-Rule" id="MF_00532"/>
    </source>
</evidence>
<evidence type="ECO:0000305" key="2"/>
<accession>B5FB54</accession>
<feature type="chain" id="PRO_1000128194" description="Small ribosomal subunit protein uS9">
    <location>
        <begin position="1"/>
        <end position="130"/>
    </location>
</feature>